<protein>
    <recommendedName>
        <fullName>Cyclotide Hyfl-B</fullName>
    </recommendedName>
</protein>
<keyword id="KW-0903">Direct protein sequencing</keyword>
<keyword id="KW-1015">Disulfide bond</keyword>
<keyword id="KW-0960">Knottin</keyword>
<keyword id="KW-0611">Plant defense</keyword>
<proteinExistence type="evidence at protein level"/>
<organism>
    <name type="scientific">Hybanthus floribundus</name>
    <name type="common">Greenviolet</name>
    <dbReference type="NCBI Taxonomy" id="343459"/>
    <lineage>
        <taxon>Eukaryota</taxon>
        <taxon>Viridiplantae</taxon>
        <taxon>Streptophyta</taxon>
        <taxon>Embryophyta</taxon>
        <taxon>Tracheophyta</taxon>
        <taxon>Spermatophyta</taxon>
        <taxon>Magnoliopsida</taxon>
        <taxon>eudicotyledons</taxon>
        <taxon>Gunneridae</taxon>
        <taxon>Pentapetalae</taxon>
        <taxon>rosids</taxon>
        <taxon>fabids</taxon>
        <taxon>Malpighiales</taxon>
        <taxon>Violaceae</taxon>
        <taxon>Hybanthus</taxon>
    </lineage>
</organism>
<dbReference type="SMR" id="P84648"/>
<dbReference type="GO" id="GO:0006952">
    <property type="term" value="P:defense response"/>
    <property type="evidence" value="ECO:0007669"/>
    <property type="project" value="UniProtKB-KW"/>
</dbReference>
<dbReference type="InterPro" id="IPR005535">
    <property type="entry name" value="Cyclotide"/>
</dbReference>
<dbReference type="InterPro" id="IPR012324">
    <property type="entry name" value="Cyclotide_moebius_CS"/>
</dbReference>
<dbReference type="InterPro" id="IPR036146">
    <property type="entry name" value="Cyclotide_sf"/>
</dbReference>
<dbReference type="Pfam" id="PF03784">
    <property type="entry name" value="Cyclotide"/>
    <property type="match status" value="1"/>
</dbReference>
<dbReference type="PIRSF" id="PIRSF037891">
    <property type="entry name" value="Cycloviolacin"/>
    <property type="match status" value="1"/>
</dbReference>
<dbReference type="SUPFAM" id="SSF57038">
    <property type="entry name" value="Cyclotides"/>
    <property type="match status" value="1"/>
</dbReference>
<dbReference type="PROSITE" id="PS51052">
    <property type="entry name" value="CYCLOTIDE"/>
    <property type="match status" value="1"/>
</dbReference>
<dbReference type="PROSITE" id="PS60009">
    <property type="entry name" value="CYCLOTIDE_MOEBIUS"/>
    <property type="match status" value="1"/>
</dbReference>
<evidence type="ECO:0000250" key="1">
    <source>
        <dbReference type="UniProtKB" id="P56879"/>
    </source>
</evidence>
<evidence type="ECO:0000255" key="2">
    <source>
        <dbReference type="PROSITE-ProRule" id="PRU00395"/>
    </source>
</evidence>
<evidence type="ECO:0000269" key="3">
    <source>
    </source>
</evidence>
<evidence type="ECO:0000305" key="4"/>
<sequence length="32" mass="3466">GSPIQCAETCFIGKCYTEELGCTCTAFLCMKN</sequence>
<accession>P84648</accession>
<reference evidence="4" key="1">
    <citation type="journal article" date="2005" name="Plant Cell">
        <title>A continent of plant defense peptide diversity: cyclotides in Australian Hybanthus (Violaceae).</title>
        <authorList>
            <person name="Simonsen S.M."/>
            <person name="Sando L."/>
            <person name="Ireland D.C."/>
            <person name="Colgrave M.L."/>
            <person name="Bharathi R."/>
            <person name="Goeransson U."/>
            <person name="Craik D.J."/>
        </authorList>
    </citation>
    <scope>PROTEIN SEQUENCE</scope>
</reference>
<comment type="function">
    <text evidence="4">Probably participates in a plant defense mechanism.</text>
</comment>
<comment type="domain">
    <text evidence="1">The presence of a 'disulfide through disulfide knot' structurally defines this protein as a knottin.</text>
</comment>
<comment type="PTM">
    <text evidence="2 3">This is a cyclic peptide.</text>
</comment>
<comment type="similarity">
    <text evidence="2">Belongs to the cyclotide family. Moebius subfamily.</text>
</comment>
<comment type="caution">
    <text evidence="4">This peptide is cyclic. The start position was chosen by similarity to OAK1 (kalata-B1) for which the DNA sequence is known.</text>
</comment>
<name>HYFLB_HYBFL</name>
<feature type="peptide" id="PRO_0000044706" description="Cyclotide Hyfl-B">
    <location>
        <begin position="1"/>
        <end position="32"/>
    </location>
</feature>
<feature type="disulfide bond" evidence="1 2">
    <location>
        <begin position="6"/>
        <end position="22"/>
    </location>
</feature>
<feature type="disulfide bond" evidence="1 2">
    <location>
        <begin position="10"/>
        <end position="24"/>
    </location>
</feature>
<feature type="disulfide bond" evidence="1 2">
    <location>
        <begin position="15"/>
        <end position="29"/>
    </location>
</feature>
<feature type="cross-link" description="Cyclopeptide (Gly-Asn)" evidence="3">
    <location>
        <begin position="1"/>
        <end position="32"/>
    </location>
</feature>